<reference key="1">
    <citation type="journal article" date="1999" name="DNA Res.">
        <title>Complete structure of the chloroplast genome of Arabidopsis thaliana.</title>
        <authorList>
            <person name="Sato S."/>
            <person name="Nakamura Y."/>
            <person name="Kaneko T."/>
            <person name="Asamizu E."/>
            <person name="Tabata S."/>
        </authorList>
    </citation>
    <scope>NUCLEOTIDE SEQUENCE [LARGE SCALE GENOMIC DNA]</scope>
    <source>
        <strain>cv. Columbia</strain>
    </source>
</reference>
<gene>
    <name evidence="1" type="primary">rpoC2</name>
    <name type="ordered locus">AtCg00170</name>
</gene>
<dbReference type="EC" id="2.7.7.6" evidence="1"/>
<dbReference type="EMBL" id="AP000423">
    <property type="protein sequence ID" value="BAA84375.1"/>
    <property type="molecule type" value="Genomic_DNA"/>
</dbReference>
<dbReference type="RefSeq" id="NP_051049.1">
    <property type="nucleotide sequence ID" value="NC_000932.1"/>
</dbReference>
<dbReference type="SMR" id="P56764"/>
<dbReference type="BioGRID" id="29979">
    <property type="interactions" value="2"/>
</dbReference>
<dbReference type="FunCoup" id="P56764">
    <property type="interactions" value="61"/>
</dbReference>
<dbReference type="IntAct" id="P56764">
    <property type="interactions" value="1"/>
</dbReference>
<dbReference type="MINT" id="P56764"/>
<dbReference type="STRING" id="3702.P56764"/>
<dbReference type="GlyGen" id="P56764">
    <property type="glycosylation" value="1 site"/>
</dbReference>
<dbReference type="iPTMnet" id="P56764"/>
<dbReference type="PaxDb" id="3702-ATCG00170.1"/>
<dbReference type="ProteomicsDB" id="226813"/>
<dbReference type="EnsemblPlants" id="ATCG00170.1">
    <property type="protein sequence ID" value="ATCG00170.1"/>
    <property type="gene ID" value="ATCG00170"/>
</dbReference>
<dbReference type="GeneID" id="844785"/>
<dbReference type="Gramene" id="ATCG00170.1">
    <property type="protein sequence ID" value="ATCG00170.1"/>
    <property type="gene ID" value="ATCG00170"/>
</dbReference>
<dbReference type="KEGG" id="ath:ArthCp012"/>
<dbReference type="Araport" id="ATCG00170"/>
<dbReference type="TAIR" id="ATCG00170">
    <property type="gene designation" value="RPOC2"/>
</dbReference>
<dbReference type="eggNOG" id="ENOG502QPYA">
    <property type="taxonomic scope" value="Eukaryota"/>
</dbReference>
<dbReference type="HOGENOM" id="CLU_000524_1_0_1"/>
<dbReference type="InParanoid" id="P56764"/>
<dbReference type="OMA" id="IEGKSDW"/>
<dbReference type="PRO" id="PR:P56764"/>
<dbReference type="Proteomes" id="UP000006548">
    <property type="component" value="Chloroplast Pltd"/>
</dbReference>
<dbReference type="ExpressionAtlas" id="P56764">
    <property type="expression patterns" value="baseline and differential"/>
</dbReference>
<dbReference type="GO" id="GO:0009507">
    <property type="term" value="C:chloroplast"/>
    <property type="evidence" value="ECO:0007005"/>
    <property type="project" value="TAIR"/>
</dbReference>
<dbReference type="GO" id="GO:0042644">
    <property type="term" value="C:chloroplast nucleoid"/>
    <property type="evidence" value="ECO:0007005"/>
    <property type="project" value="TAIR"/>
</dbReference>
<dbReference type="GO" id="GO:0009570">
    <property type="term" value="C:chloroplast stroma"/>
    <property type="evidence" value="ECO:0007005"/>
    <property type="project" value="TAIR"/>
</dbReference>
<dbReference type="GO" id="GO:0000428">
    <property type="term" value="C:DNA-directed RNA polymerase complex"/>
    <property type="evidence" value="ECO:0007669"/>
    <property type="project" value="UniProtKB-KW"/>
</dbReference>
<dbReference type="GO" id="GO:0005739">
    <property type="term" value="C:mitochondrion"/>
    <property type="evidence" value="ECO:0007669"/>
    <property type="project" value="GOC"/>
</dbReference>
<dbReference type="GO" id="GO:0003677">
    <property type="term" value="F:DNA binding"/>
    <property type="evidence" value="ECO:0007669"/>
    <property type="project" value="UniProtKB-UniRule"/>
</dbReference>
<dbReference type="GO" id="GO:0003899">
    <property type="term" value="F:DNA-directed RNA polymerase activity"/>
    <property type="evidence" value="ECO:0007669"/>
    <property type="project" value="UniProtKB-UniRule"/>
</dbReference>
<dbReference type="GO" id="GO:0008270">
    <property type="term" value="F:zinc ion binding"/>
    <property type="evidence" value="ECO:0007669"/>
    <property type="project" value="UniProtKB-UniRule"/>
</dbReference>
<dbReference type="GO" id="GO:0006351">
    <property type="term" value="P:DNA-templated transcription"/>
    <property type="evidence" value="ECO:0007669"/>
    <property type="project" value="UniProtKB-UniRule"/>
</dbReference>
<dbReference type="CDD" id="cd02655">
    <property type="entry name" value="RNAP_beta'_C"/>
    <property type="match status" value="1"/>
</dbReference>
<dbReference type="FunFam" id="1.10.132.30:FF:000002">
    <property type="entry name" value="DNA-directed RNA polymerase subunit beta"/>
    <property type="match status" value="1"/>
</dbReference>
<dbReference type="FunFam" id="1.10.1790.20:FF:000002">
    <property type="entry name" value="DNA-directed RNA polymerase subunit beta"/>
    <property type="match status" value="1"/>
</dbReference>
<dbReference type="FunFam" id="1.10.274.100:FF:000011">
    <property type="entry name" value="DNA-directed RNA polymerase subunit beta"/>
    <property type="match status" value="1"/>
</dbReference>
<dbReference type="Gene3D" id="1.10.132.30">
    <property type="match status" value="1"/>
</dbReference>
<dbReference type="Gene3D" id="1.10.150.390">
    <property type="match status" value="1"/>
</dbReference>
<dbReference type="Gene3D" id="1.10.1790.20">
    <property type="match status" value="1"/>
</dbReference>
<dbReference type="Gene3D" id="1.10.274.100">
    <property type="entry name" value="RNA polymerase Rpb1, domain 3"/>
    <property type="match status" value="1"/>
</dbReference>
<dbReference type="HAMAP" id="MF_01324">
    <property type="entry name" value="RNApol_bact_RpoC2"/>
    <property type="match status" value="1"/>
</dbReference>
<dbReference type="InterPro" id="IPR012756">
    <property type="entry name" value="DNA-dir_RpoC2_beta_pp"/>
</dbReference>
<dbReference type="InterPro" id="IPR050254">
    <property type="entry name" value="RNA_pol_beta''_euk"/>
</dbReference>
<dbReference type="InterPro" id="IPR042102">
    <property type="entry name" value="RNA_pol_Rpb1_3_sf"/>
</dbReference>
<dbReference type="InterPro" id="IPR007083">
    <property type="entry name" value="RNA_pol_Rpb1_4"/>
</dbReference>
<dbReference type="InterPro" id="IPR007081">
    <property type="entry name" value="RNA_pol_Rpb1_5"/>
</dbReference>
<dbReference type="InterPro" id="IPR038120">
    <property type="entry name" value="Rpb1_funnel_sf"/>
</dbReference>
<dbReference type="NCBIfam" id="TIGR02388">
    <property type="entry name" value="rpoC2_cyan"/>
    <property type="match status" value="1"/>
</dbReference>
<dbReference type="PANTHER" id="PTHR34995">
    <property type="entry name" value="DNA-DIRECTED RNA POLYMERASE SUBUNIT BETA"/>
    <property type="match status" value="1"/>
</dbReference>
<dbReference type="PANTHER" id="PTHR34995:SF1">
    <property type="entry name" value="DNA-DIRECTED RNA POLYMERASE SUBUNIT BETA"/>
    <property type="match status" value="1"/>
</dbReference>
<dbReference type="Pfam" id="PF05000">
    <property type="entry name" value="RNA_pol_Rpb1_4"/>
    <property type="match status" value="1"/>
</dbReference>
<dbReference type="Pfam" id="PF04998">
    <property type="entry name" value="RNA_pol_Rpb1_5"/>
    <property type="match status" value="2"/>
</dbReference>
<dbReference type="SUPFAM" id="SSF64484">
    <property type="entry name" value="beta and beta-prime subunits of DNA dependent RNA-polymerase"/>
    <property type="match status" value="1"/>
</dbReference>
<comment type="function">
    <text evidence="1">DNA-dependent RNA polymerase catalyzes the transcription of DNA into RNA using the four ribonucleoside triphosphates as substrates.</text>
</comment>
<comment type="catalytic activity">
    <reaction evidence="1">
        <text>RNA(n) + a ribonucleoside 5'-triphosphate = RNA(n+1) + diphosphate</text>
        <dbReference type="Rhea" id="RHEA:21248"/>
        <dbReference type="Rhea" id="RHEA-COMP:14527"/>
        <dbReference type="Rhea" id="RHEA-COMP:17342"/>
        <dbReference type="ChEBI" id="CHEBI:33019"/>
        <dbReference type="ChEBI" id="CHEBI:61557"/>
        <dbReference type="ChEBI" id="CHEBI:140395"/>
        <dbReference type="EC" id="2.7.7.6"/>
    </reaction>
</comment>
<comment type="cofactor">
    <cofactor evidence="1">
        <name>Zn(2+)</name>
        <dbReference type="ChEBI" id="CHEBI:29105"/>
    </cofactor>
    <text evidence="1">Binds 1 Zn(2+) ion per subunit.</text>
</comment>
<comment type="subunit">
    <text evidence="1">In plastids the minimal PEP RNA polymerase catalytic core is composed of four subunits: alpha, beta, beta', and beta''. When a (nuclear-encoded) sigma factor is associated with the core the holoenzyme is formed, which can initiate transcription.</text>
</comment>
<comment type="subcellular location">
    <subcellularLocation>
        <location evidence="1">Plastid</location>
        <location evidence="1">Chloroplast</location>
    </subcellularLocation>
</comment>
<comment type="similarity">
    <text evidence="1">Belongs to the RNA polymerase beta' chain family. RpoC2 subfamily.</text>
</comment>
<name>RPOC2_ARATH</name>
<feature type="chain" id="PRO_0000067914" description="DNA-directed RNA polymerase subunit beta''">
    <location>
        <begin position="1"/>
        <end position="1376"/>
    </location>
</feature>
<feature type="binding site" evidence="1">
    <location>
        <position position="220"/>
    </location>
    <ligand>
        <name>Zn(2+)</name>
        <dbReference type="ChEBI" id="CHEBI:29105"/>
    </ligand>
</feature>
<feature type="binding site" evidence="1">
    <location>
        <position position="293"/>
    </location>
    <ligand>
        <name>Zn(2+)</name>
        <dbReference type="ChEBI" id="CHEBI:29105"/>
    </ligand>
</feature>
<feature type="binding site" evidence="1">
    <location>
        <position position="300"/>
    </location>
    <ligand>
        <name>Zn(2+)</name>
        <dbReference type="ChEBI" id="CHEBI:29105"/>
    </ligand>
</feature>
<feature type="binding site" evidence="1">
    <location>
        <position position="303"/>
    </location>
    <ligand>
        <name>Zn(2+)</name>
        <dbReference type="ChEBI" id="CHEBI:29105"/>
    </ligand>
</feature>
<protein>
    <recommendedName>
        <fullName evidence="1">DNA-directed RNA polymerase subunit beta''</fullName>
        <ecNumber evidence="1">2.7.7.6</ecNumber>
    </recommendedName>
    <alternativeName>
        <fullName evidence="1">PEP</fullName>
    </alternativeName>
    <alternativeName>
        <fullName evidence="1">Plastid-encoded RNA polymerase subunit beta''</fullName>
        <shortName evidence="1">RNA polymerase subunit beta''</shortName>
    </alternativeName>
</protein>
<organism>
    <name type="scientific">Arabidopsis thaliana</name>
    <name type="common">Mouse-ear cress</name>
    <dbReference type="NCBI Taxonomy" id="3702"/>
    <lineage>
        <taxon>Eukaryota</taxon>
        <taxon>Viridiplantae</taxon>
        <taxon>Streptophyta</taxon>
        <taxon>Embryophyta</taxon>
        <taxon>Tracheophyta</taxon>
        <taxon>Spermatophyta</taxon>
        <taxon>Magnoliopsida</taxon>
        <taxon>eudicotyledons</taxon>
        <taxon>Gunneridae</taxon>
        <taxon>Pentapetalae</taxon>
        <taxon>rosids</taxon>
        <taxon>malvids</taxon>
        <taxon>Brassicales</taxon>
        <taxon>Brassicaceae</taxon>
        <taxon>Camelineae</taxon>
        <taxon>Arabidopsis</taxon>
    </lineage>
</organism>
<accession>P56764</accession>
<evidence type="ECO:0000255" key="1">
    <source>
        <dbReference type="HAMAP-Rule" id="MF_01324"/>
    </source>
</evidence>
<geneLocation type="chloroplast"/>
<keyword id="KW-0150">Chloroplast</keyword>
<keyword id="KW-0240">DNA-directed RNA polymerase</keyword>
<keyword id="KW-0479">Metal-binding</keyword>
<keyword id="KW-0548">Nucleotidyltransferase</keyword>
<keyword id="KW-0934">Plastid</keyword>
<keyword id="KW-1185">Reference proteome</keyword>
<keyword id="KW-0804">Transcription</keyword>
<keyword id="KW-0808">Transferase</keyword>
<keyword id="KW-0862">Zinc</keyword>
<proteinExistence type="inferred from homology"/>
<sequence>MAERANLVFHNKVIDGTAIKRLISRLIDHFGMAYTSHILDQVKTLGFQQATATSISLGIDDLLTIPSKGWLVQDAEQQSWILEKHHHYGNVHAVEKLRQSIEIWYATSEYLRQEMNPNFRMTDPFNPVHMMSFSGARGNASQVHQLVGMRGLMSDPQGQMIDLPIQSNLREGLSLTEYIISCYGARKGVVDTAVRTSDAGYLTRRLVEVVQHIVVRRTDCGTIRGISVSPRNKNRMMSERIFIQTLIGRVLADDIYIGSRCVAFRNQDLGIGLVNRLITFGTQSISIRTPFTCRSTSWICRLCYGRSPTHGDLVELGEAVGIIAGQSIGEPGTQLTLRTFHTGGVFTGGTAEHVRAPYNGKIKFNEDLVHPTRTRHGHPAFLCYIDLSVIIESEDIIHSVTIPPKSFLLVQNDQYVESEQVIAEIREGTYTFHFKERVRKYIYSDSEGEMHWSTDVSHAPEFTYSNVHLLPKTSHLWILSGGSCGSSLIRFSIHKDQDQMNIPFLSAERKSISSLSVNNDQVSQKFFSSDFADPKKLGIYDYSELNGNLGTSHYNLIYSAIFHENSDLLAKRRRNRFLIPFQSIQEQEKEFIPQSGISVEIPINGIFRRNSIFAFFDDPRYRRKSSGILKYGTLKADSIIQKEDMIEYRGVQKIKTKYEMKVDRFFFIPEEVHILPESSAIMVQNYSIIGVDTRLTLNIRSQVGGLIRVEKKKKRIELKIFSGDIHFPDKTDKISRHSGILIPPGRGKKNSKESKKFKNWIYVQRITPTKKKFFVLVRPVATYEIADSINLATLFPQDLFREKDNIQLRVFNYILYGNGKPTRGISDTSIQLVRTCLVLNWDKNSSLEEVRAFFVEVSTKGLIQDFIRIGLVKSHISYIRKRNNSPDSGLISADHMNPFYSISPKSGILQQSLRQNHGTIRMFLNRNKESQSLLILSSSNCFRMGPFNHVKHHNVINQSIKKNTLITIKNSSGPLGTATPISNFYSFLPLLTYNQISLIKYFQLDNLKYIFQKINSYLIDENGIILNLDPYSNVVLNPFKLNWYFLHQNYHHNYCEETSTIISLGQFFCENVCIAKKEPHLKSGQVLIVQRDSAVIRSAKPYLATPGAKVHGHYSEILYEGDTLVTFIYEKSRSGDITQGLPKVEQVLEVRSIDSISLNLEKRIKGWNKCITRILGIPWGFLIGAELTIVQSRISLVNKIQKVYRSQGVQIHNRHIEIIVRQITSKVLVSEEGMSNVFLPGELIGLLRAERTGRALEEAICYRAVLLGITRASLNTQSFISEASFQETARVLAKAALRGRIDWLKGLKENVVLGGVIPAGTGFNKGLVHCSRQHTNIILEKKTKNLALFEGDMRDILFYHREFCDSSISKSDFSRI</sequence>